<reference key="1">
    <citation type="journal article" date="2006" name="Proc. Natl. Acad. Sci. U.S.A.">
        <title>Comparative genomics of the lactic acid bacteria.</title>
        <authorList>
            <person name="Makarova K.S."/>
            <person name="Slesarev A."/>
            <person name="Wolf Y.I."/>
            <person name="Sorokin A."/>
            <person name="Mirkin B."/>
            <person name="Koonin E.V."/>
            <person name="Pavlov A."/>
            <person name="Pavlova N."/>
            <person name="Karamychev V."/>
            <person name="Polouchine N."/>
            <person name="Shakhova V."/>
            <person name="Grigoriev I."/>
            <person name="Lou Y."/>
            <person name="Rohksar D."/>
            <person name="Lucas S."/>
            <person name="Huang K."/>
            <person name="Goodstein D.M."/>
            <person name="Hawkins T."/>
            <person name="Plengvidhya V."/>
            <person name="Welker D."/>
            <person name="Hughes J."/>
            <person name="Goh Y."/>
            <person name="Benson A."/>
            <person name="Baldwin K."/>
            <person name="Lee J.-H."/>
            <person name="Diaz-Muniz I."/>
            <person name="Dosti B."/>
            <person name="Smeianov V."/>
            <person name="Wechter W."/>
            <person name="Barabote R."/>
            <person name="Lorca G."/>
            <person name="Altermann E."/>
            <person name="Barrangou R."/>
            <person name="Ganesan B."/>
            <person name="Xie Y."/>
            <person name="Rawsthorne H."/>
            <person name="Tamir D."/>
            <person name="Parker C."/>
            <person name="Breidt F."/>
            <person name="Broadbent J.R."/>
            <person name="Hutkins R."/>
            <person name="O'Sullivan D."/>
            <person name="Steele J."/>
            <person name="Unlu G."/>
            <person name="Saier M.H. Jr."/>
            <person name="Klaenhammer T."/>
            <person name="Richardson P."/>
            <person name="Kozyavkin S."/>
            <person name="Weimer B.C."/>
            <person name="Mills D.A."/>
        </authorList>
    </citation>
    <scope>NUCLEOTIDE SEQUENCE [LARGE SCALE GENOMIC DNA]</scope>
    <source>
        <strain>ATCC 334 / BCRC 17002 / CCUG 31169 / CIP 107868 / KCTC 3260 / NRRL B-441</strain>
    </source>
</reference>
<proteinExistence type="inferred from homology"/>
<gene>
    <name type="primary">alaS</name>
    <name type="ordered locus">LSEI_0784</name>
</gene>
<evidence type="ECO:0000250" key="1"/>
<evidence type="ECO:0000305" key="2"/>
<keyword id="KW-0030">Aminoacyl-tRNA synthetase</keyword>
<keyword id="KW-0067">ATP-binding</keyword>
<keyword id="KW-0963">Cytoplasm</keyword>
<keyword id="KW-0436">Ligase</keyword>
<keyword id="KW-0547">Nucleotide-binding</keyword>
<keyword id="KW-0648">Protein biosynthesis</keyword>
<keyword id="KW-1185">Reference proteome</keyword>
<keyword id="KW-0694">RNA-binding</keyword>
<keyword id="KW-0820">tRNA-binding</keyword>
<accession>Q03B02</accession>
<sequence length="881" mass="97253">MKKMSSGEIRQMFLDFFKSKGHAVEPSASLIPVDDPTLLWINSGVATLKKYFDGSVVPDNPRITNAQKSIRTNDIENVGKTARHLTFFEMLGNFSVGDYFKKEVIPWAWELLTSPKWFGFDPKRLYVTVYPKDKVTKELWQKTGVPDDHIVEAEDNFWDIGEGPSGPDSEIFYDRGQQFNNVAEDDPENYPGGENSRYVEIWNIVFSELNHLPDGRFVEQPHKNIDTGMGLERLVAVIQGTPTIFETDLFMPIIKATEKMSAGKRYGVSAQDDVSFKIIADHARTVTFAIGDGALPSNEGRGYVLRRLIRRAVLNGKKLGIDHDFLYQLVPVVGEIMKSYYPQILANQQFIQKVIESEEARFRQTLDAGVTLLNQIIADLKQDGKKEIPGADAFKLFDTYGFPVEMTNEYAQDEGLQVDMAGFKKNMAAQRDRARKARGDRQSMGSQDKVLMSITTPSKFTGWTELDHKHASLQTIVVNDQLQDSVSEGTAQLIFDETPFYAEMGGQVADHGEIKAQDGTVLADVSDVQHAPNGQNLHTVTVKGKLETGQQYWLSVDPLRRKKVSLNHTATHLLDQALRDVLGEHTHQAGSLVEPDYLRFDFTNFGQVTPKQLRQVETIVNQKIWDALPITWKEMPIEEAKKLGAIAMFGDKYGSVVRIVKIGDYNTEFDGGTHPTNSNALGLFKITSESGIGAGIRRVEAVTSKEAYEYLTQQQDWLSETAENLKIDQVKNVPSKVTQLQADLKAEQKTVAGLQAKLAAQAAAGIFDHPEEVGGLKLIAKQVQVAGMNELRQLADKWKAKQASDILVLGTEVSGKANLLVAVNDTANQAGFKAGDLIKAIAPKVGGGGGGRPDMAQAGGKNPAGIPAALSEAKTVISQKA</sequence>
<feature type="chain" id="PRO_0000347644" description="Alanine--tRNA ligase">
    <location>
        <begin position="1"/>
        <end position="881"/>
    </location>
</feature>
<dbReference type="EC" id="6.1.1.7"/>
<dbReference type="EMBL" id="CP000423">
    <property type="protein sequence ID" value="ABJ69620.1"/>
    <property type="molecule type" value="Genomic_DNA"/>
</dbReference>
<dbReference type="RefSeq" id="WP_003587396.1">
    <property type="nucleotide sequence ID" value="NC_008526.1"/>
</dbReference>
<dbReference type="RefSeq" id="YP_806062.1">
    <property type="nucleotide sequence ID" value="NC_008526.1"/>
</dbReference>
<dbReference type="SMR" id="Q03B02"/>
<dbReference type="STRING" id="321967.LSEI_0784"/>
<dbReference type="PaxDb" id="321967-LSEI_0784"/>
<dbReference type="KEGG" id="lca:LSEI_0784"/>
<dbReference type="PATRIC" id="fig|321967.11.peg.786"/>
<dbReference type="HOGENOM" id="CLU_004485_1_1_9"/>
<dbReference type="Proteomes" id="UP000001651">
    <property type="component" value="Chromosome"/>
</dbReference>
<dbReference type="GO" id="GO:0005829">
    <property type="term" value="C:cytosol"/>
    <property type="evidence" value="ECO:0007669"/>
    <property type="project" value="TreeGrafter"/>
</dbReference>
<dbReference type="GO" id="GO:0004813">
    <property type="term" value="F:alanine-tRNA ligase activity"/>
    <property type="evidence" value="ECO:0007669"/>
    <property type="project" value="UniProtKB-UniRule"/>
</dbReference>
<dbReference type="GO" id="GO:0002161">
    <property type="term" value="F:aminoacyl-tRNA deacylase activity"/>
    <property type="evidence" value="ECO:0007669"/>
    <property type="project" value="TreeGrafter"/>
</dbReference>
<dbReference type="GO" id="GO:0005524">
    <property type="term" value="F:ATP binding"/>
    <property type="evidence" value="ECO:0007669"/>
    <property type="project" value="UniProtKB-UniRule"/>
</dbReference>
<dbReference type="GO" id="GO:0140096">
    <property type="term" value="F:catalytic activity, acting on a protein"/>
    <property type="evidence" value="ECO:0007669"/>
    <property type="project" value="UniProtKB-ARBA"/>
</dbReference>
<dbReference type="GO" id="GO:0016740">
    <property type="term" value="F:transferase activity"/>
    <property type="evidence" value="ECO:0007669"/>
    <property type="project" value="UniProtKB-ARBA"/>
</dbReference>
<dbReference type="GO" id="GO:0000049">
    <property type="term" value="F:tRNA binding"/>
    <property type="evidence" value="ECO:0007669"/>
    <property type="project" value="UniProtKB-KW"/>
</dbReference>
<dbReference type="GO" id="GO:0006419">
    <property type="term" value="P:alanyl-tRNA aminoacylation"/>
    <property type="evidence" value="ECO:0007669"/>
    <property type="project" value="UniProtKB-UniRule"/>
</dbReference>
<dbReference type="CDD" id="cd00673">
    <property type="entry name" value="AlaRS_core"/>
    <property type="match status" value="1"/>
</dbReference>
<dbReference type="FunFam" id="3.10.310.40:FF:000001">
    <property type="entry name" value="Alanine--tRNA ligase"/>
    <property type="match status" value="1"/>
</dbReference>
<dbReference type="FunFam" id="3.30.930.10:FF:000046">
    <property type="entry name" value="Alanine--tRNA ligase"/>
    <property type="match status" value="1"/>
</dbReference>
<dbReference type="FunFam" id="3.30.980.10:FF:000004">
    <property type="entry name" value="Alanine--tRNA ligase, cytoplasmic"/>
    <property type="match status" value="1"/>
</dbReference>
<dbReference type="Gene3D" id="2.40.30.130">
    <property type="match status" value="1"/>
</dbReference>
<dbReference type="Gene3D" id="3.10.310.40">
    <property type="match status" value="1"/>
</dbReference>
<dbReference type="Gene3D" id="3.30.54.20">
    <property type="match status" value="1"/>
</dbReference>
<dbReference type="Gene3D" id="6.10.250.550">
    <property type="match status" value="1"/>
</dbReference>
<dbReference type="Gene3D" id="3.30.930.10">
    <property type="entry name" value="Bira Bifunctional Protein, Domain 2"/>
    <property type="match status" value="1"/>
</dbReference>
<dbReference type="Gene3D" id="3.30.980.10">
    <property type="entry name" value="Threonyl-trna Synthetase, Chain A, domain 2"/>
    <property type="match status" value="1"/>
</dbReference>
<dbReference type="HAMAP" id="MF_00036_B">
    <property type="entry name" value="Ala_tRNA_synth_B"/>
    <property type="match status" value="1"/>
</dbReference>
<dbReference type="InterPro" id="IPR006195">
    <property type="entry name" value="aa-tRNA-synth_II"/>
</dbReference>
<dbReference type="InterPro" id="IPR045864">
    <property type="entry name" value="aa-tRNA-synth_II/BPL/LPL"/>
</dbReference>
<dbReference type="InterPro" id="IPR002318">
    <property type="entry name" value="Ala-tRNA-lgiase_IIc"/>
</dbReference>
<dbReference type="InterPro" id="IPR018162">
    <property type="entry name" value="Ala-tRNA-ligase_IIc_anticod-bd"/>
</dbReference>
<dbReference type="InterPro" id="IPR018165">
    <property type="entry name" value="Ala-tRNA-synth_IIc_core"/>
</dbReference>
<dbReference type="InterPro" id="IPR018164">
    <property type="entry name" value="Ala-tRNA-synth_IIc_N"/>
</dbReference>
<dbReference type="InterPro" id="IPR050058">
    <property type="entry name" value="Ala-tRNA_ligase"/>
</dbReference>
<dbReference type="InterPro" id="IPR023033">
    <property type="entry name" value="Ala_tRNA_ligase_euk/bac"/>
</dbReference>
<dbReference type="InterPro" id="IPR003156">
    <property type="entry name" value="DHHA1_dom"/>
</dbReference>
<dbReference type="InterPro" id="IPR018163">
    <property type="entry name" value="Thr/Ala-tRNA-synth_IIc_edit"/>
</dbReference>
<dbReference type="InterPro" id="IPR009000">
    <property type="entry name" value="Transl_B-barrel_sf"/>
</dbReference>
<dbReference type="InterPro" id="IPR012947">
    <property type="entry name" value="tRNA_SAD"/>
</dbReference>
<dbReference type="NCBIfam" id="TIGR00344">
    <property type="entry name" value="alaS"/>
    <property type="match status" value="1"/>
</dbReference>
<dbReference type="PANTHER" id="PTHR11777:SF9">
    <property type="entry name" value="ALANINE--TRNA LIGASE, CYTOPLASMIC"/>
    <property type="match status" value="1"/>
</dbReference>
<dbReference type="PANTHER" id="PTHR11777">
    <property type="entry name" value="ALANYL-TRNA SYNTHETASE"/>
    <property type="match status" value="1"/>
</dbReference>
<dbReference type="Pfam" id="PF02272">
    <property type="entry name" value="DHHA1"/>
    <property type="match status" value="1"/>
</dbReference>
<dbReference type="Pfam" id="PF01411">
    <property type="entry name" value="tRNA-synt_2c"/>
    <property type="match status" value="1"/>
</dbReference>
<dbReference type="Pfam" id="PF07973">
    <property type="entry name" value="tRNA_SAD"/>
    <property type="match status" value="1"/>
</dbReference>
<dbReference type="PRINTS" id="PR00980">
    <property type="entry name" value="TRNASYNTHALA"/>
</dbReference>
<dbReference type="SMART" id="SM00863">
    <property type="entry name" value="tRNA_SAD"/>
    <property type="match status" value="1"/>
</dbReference>
<dbReference type="SUPFAM" id="SSF55681">
    <property type="entry name" value="Class II aaRS and biotin synthetases"/>
    <property type="match status" value="1"/>
</dbReference>
<dbReference type="SUPFAM" id="SSF101353">
    <property type="entry name" value="Putative anticodon-binding domain of alanyl-tRNA synthetase (AlaRS)"/>
    <property type="match status" value="1"/>
</dbReference>
<dbReference type="SUPFAM" id="SSF55186">
    <property type="entry name" value="ThrRS/AlaRS common domain"/>
    <property type="match status" value="1"/>
</dbReference>
<dbReference type="SUPFAM" id="SSF50447">
    <property type="entry name" value="Translation proteins"/>
    <property type="match status" value="1"/>
</dbReference>
<dbReference type="PROSITE" id="PS50860">
    <property type="entry name" value="AA_TRNA_LIGASE_II_ALA"/>
    <property type="match status" value="1"/>
</dbReference>
<name>SYA_LACP3</name>
<protein>
    <recommendedName>
        <fullName>Alanine--tRNA ligase</fullName>
        <ecNumber>6.1.1.7</ecNumber>
    </recommendedName>
    <alternativeName>
        <fullName>Alanyl-tRNA synthetase</fullName>
        <shortName>AlaRS</shortName>
    </alternativeName>
</protein>
<organism>
    <name type="scientific">Lacticaseibacillus paracasei (strain ATCC 334 / BCRC 17002 / CCUG 31169 / CIP 107868 / KCTC 3260 / NRRL B-441)</name>
    <name type="common">Lactobacillus paracasei</name>
    <dbReference type="NCBI Taxonomy" id="321967"/>
    <lineage>
        <taxon>Bacteria</taxon>
        <taxon>Bacillati</taxon>
        <taxon>Bacillota</taxon>
        <taxon>Bacilli</taxon>
        <taxon>Lactobacillales</taxon>
        <taxon>Lactobacillaceae</taxon>
        <taxon>Lacticaseibacillus</taxon>
    </lineage>
</organism>
<comment type="function">
    <text evidence="1">Catalyzes the attachment of alanine to tRNA(Ala) in a two-step reaction: alanine is first activated by ATP to form Ala-AMP and then transferred to the acceptor end of tRNA(Ala). Also edits incorrectly charged Ser-tRNA(Ala) and Gly-tRNA(Ala) via its editing domain (By similarity).</text>
</comment>
<comment type="catalytic activity">
    <reaction>
        <text>tRNA(Ala) + L-alanine + ATP = L-alanyl-tRNA(Ala) + AMP + diphosphate</text>
        <dbReference type="Rhea" id="RHEA:12540"/>
        <dbReference type="Rhea" id="RHEA-COMP:9657"/>
        <dbReference type="Rhea" id="RHEA-COMP:9923"/>
        <dbReference type="ChEBI" id="CHEBI:30616"/>
        <dbReference type="ChEBI" id="CHEBI:33019"/>
        <dbReference type="ChEBI" id="CHEBI:57972"/>
        <dbReference type="ChEBI" id="CHEBI:78442"/>
        <dbReference type="ChEBI" id="CHEBI:78497"/>
        <dbReference type="ChEBI" id="CHEBI:456215"/>
        <dbReference type="EC" id="6.1.1.7"/>
    </reaction>
</comment>
<comment type="subcellular location">
    <subcellularLocation>
        <location evidence="1">Cytoplasm</location>
    </subcellularLocation>
</comment>
<comment type="domain">
    <text evidence="1">Consists of three domains; the N-terminal catalytic domain, the editing domain and the C-terminal C-Ala domain. The editing domain removes incorrectly charged amino acids, while the C-Ala domain, along with tRNA(Ala), serves as a bridge to cooperatively bring together the editing and aminoacylation centers thus stimulating deacylation of misacylated tRNAs (By similarity).</text>
</comment>
<comment type="similarity">
    <text evidence="2">Belongs to the class-II aminoacyl-tRNA synthetase family.</text>
</comment>